<dbReference type="EC" id="3.1.4.35"/>
<dbReference type="EMBL" id="CM000364">
    <property type="protein sequence ID" value="EDX12939.1"/>
    <property type="molecule type" value="Genomic_DNA"/>
</dbReference>
<dbReference type="SMR" id="B4QZU1"/>
<dbReference type="STRING" id="7240.B4QZU1"/>
<dbReference type="EnsemblMetazoa" id="FBtr0220325">
    <property type="protein sequence ID" value="FBpp0218817"/>
    <property type="gene ID" value="FBgn0191887"/>
</dbReference>
<dbReference type="EnsemblMetazoa" id="XM_016176727.3">
    <property type="protein sequence ID" value="XP_016034708.1"/>
    <property type="gene ID" value="LOC6728084"/>
</dbReference>
<dbReference type="GeneID" id="6728084"/>
<dbReference type="KEGG" id="dsi:Dsimw501_GD20415"/>
<dbReference type="HOGENOM" id="CLU_006980_0_2_1"/>
<dbReference type="OMA" id="FHIPYEV"/>
<dbReference type="OrthoDB" id="74705at2759"/>
<dbReference type="PhylomeDB" id="B4QZU1"/>
<dbReference type="ChiTaRS" id="Pde6">
    <property type="organism name" value="fly"/>
</dbReference>
<dbReference type="Proteomes" id="UP000000304">
    <property type="component" value="Chromosome 3R"/>
</dbReference>
<dbReference type="Bgee" id="FBgn0191887">
    <property type="expression patterns" value="Expressed in adult organism and 2 other cell types or tissues"/>
</dbReference>
<dbReference type="GO" id="GO:0016020">
    <property type="term" value="C:membrane"/>
    <property type="evidence" value="ECO:0000250"/>
    <property type="project" value="UniProtKB"/>
</dbReference>
<dbReference type="GO" id="GO:0005886">
    <property type="term" value="C:plasma membrane"/>
    <property type="evidence" value="ECO:0007669"/>
    <property type="project" value="UniProtKB-SubCell"/>
</dbReference>
<dbReference type="GO" id="GO:0047555">
    <property type="term" value="F:3',5'-cyclic-GMP phosphodiesterase activity"/>
    <property type="evidence" value="ECO:0000250"/>
    <property type="project" value="UniProtKB"/>
</dbReference>
<dbReference type="GO" id="GO:0046872">
    <property type="term" value="F:metal ion binding"/>
    <property type="evidence" value="ECO:0007669"/>
    <property type="project" value="UniProtKB-KW"/>
</dbReference>
<dbReference type="GO" id="GO:0046068">
    <property type="term" value="P:cGMP metabolic process"/>
    <property type="evidence" value="ECO:0000250"/>
    <property type="project" value="UniProtKB"/>
</dbReference>
<dbReference type="GO" id="GO:0007165">
    <property type="term" value="P:signal transduction"/>
    <property type="evidence" value="ECO:0007669"/>
    <property type="project" value="InterPro"/>
</dbReference>
<dbReference type="CDD" id="cd00077">
    <property type="entry name" value="HDc"/>
    <property type="match status" value="1"/>
</dbReference>
<dbReference type="FunFam" id="1.10.1300.10:FF:000003">
    <property type="entry name" value="Phosphodiesterase"/>
    <property type="match status" value="1"/>
</dbReference>
<dbReference type="FunFam" id="3.30.450.40:FF:000031">
    <property type="entry name" value="Phosphodiesterase"/>
    <property type="match status" value="1"/>
</dbReference>
<dbReference type="Gene3D" id="3.30.450.40">
    <property type="match status" value="2"/>
</dbReference>
<dbReference type="Gene3D" id="1.10.1300.10">
    <property type="entry name" value="3'5'-cyclic nucleotide phosphodiesterase, catalytic domain"/>
    <property type="match status" value="1"/>
</dbReference>
<dbReference type="InterPro" id="IPR003018">
    <property type="entry name" value="GAF"/>
</dbReference>
<dbReference type="InterPro" id="IPR029016">
    <property type="entry name" value="GAF-like_dom_sf"/>
</dbReference>
<dbReference type="InterPro" id="IPR003607">
    <property type="entry name" value="HD/PDEase_dom"/>
</dbReference>
<dbReference type="InterPro" id="IPR023088">
    <property type="entry name" value="PDEase"/>
</dbReference>
<dbReference type="InterPro" id="IPR002073">
    <property type="entry name" value="PDEase_catalytic_dom"/>
</dbReference>
<dbReference type="InterPro" id="IPR036971">
    <property type="entry name" value="PDEase_catalytic_dom_sf"/>
</dbReference>
<dbReference type="InterPro" id="IPR023174">
    <property type="entry name" value="PDEase_CS"/>
</dbReference>
<dbReference type="PANTHER" id="PTHR11347">
    <property type="entry name" value="CYCLIC NUCLEOTIDE PHOSPHODIESTERASE"/>
    <property type="match status" value="1"/>
</dbReference>
<dbReference type="Pfam" id="PF01590">
    <property type="entry name" value="GAF"/>
    <property type="match status" value="2"/>
</dbReference>
<dbReference type="Pfam" id="PF00233">
    <property type="entry name" value="PDEase_I"/>
    <property type="match status" value="1"/>
</dbReference>
<dbReference type="PRINTS" id="PR00387">
    <property type="entry name" value="PDIESTERASE1"/>
</dbReference>
<dbReference type="SMART" id="SM00065">
    <property type="entry name" value="GAF"/>
    <property type="match status" value="2"/>
</dbReference>
<dbReference type="SMART" id="SM00471">
    <property type="entry name" value="HDc"/>
    <property type="match status" value="1"/>
</dbReference>
<dbReference type="SUPFAM" id="SSF55781">
    <property type="entry name" value="GAF domain-like"/>
    <property type="match status" value="2"/>
</dbReference>
<dbReference type="SUPFAM" id="SSF109604">
    <property type="entry name" value="HD-domain/PDEase-like"/>
    <property type="match status" value="1"/>
</dbReference>
<dbReference type="PROSITE" id="PS00126">
    <property type="entry name" value="PDEASE_I_1"/>
    <property type="match status" value="1"/>
</dbReference>
<dbReference type="PROSITE" id="PS51845">
    <property type="entry name" value="PDEASE_I_2"/>
    <property type="match status" value="1"/>
</dbReference>
<proteinExistence type="inferred from homology"/>
<reference evidence="6" key="1">
    <citation type="journal article" date="2007" name="Nature">
        <title>Evolution of genes and genomes on the Drosophila phylogeny.</title>
        <authorList>
            <consortium name="Drosophila 12 genomes consortium"/>
        </authorList>
    </citation>
    <scope>NUCLEOTIDE SEQUENCE [LARGE SCALE GENOMIC DNA]</scope>
</reference>
<name>PDE6_DROSI</name>
<gene>
    <name evidence="2" type="primary">Pde6</name>
    <name type="ORF">GD20415</name>
</gene>
<comment type="function">
    <text evidence="2">Has a role regulating cGMP transport in Malpighian tubule principal cells.</text>
</comment>
<comment type="catalytic activity">
    <reaction evidence="2">
        <text>3',5'-cyclic GMP + H2O = GMP + H(+)</text>
        <dbReference type="Rhea" id="RHEA:16957"/>
        <dbReference type="ChEBI" id="CHEBI:15377"/>
        <dbReference type="ChEBI" id="CHEBI:15378"/>
        <dbReference type="ChEBI" id="CHEBI:57746"/>
        <dbReference type="ChEBI" id="CHEBI:58115"/>
        <dbReference type="EC" id="3.1.4.35"/>
    </reaction>
</comment>
<comment type="cofactor">
    <cofactor evidence="1">
        <name>a divalent metal cation</name>
        <dbReference type="ChEBI" id="CHEBI:60240"/>
    </cofactor>
    <text evidence="1">Binds 2 divalent metal cations per subunit. Site 1 may preferentially bind zinc ions, while site 2 has a preference for magnesium and/or manganese ions.</text>
</comment>
<comment type="subunit">
    <text evidence="2">Interacts with PrBP.</text>
</comment>
<comment type="subcellular location">
    <subcellularLocation>
        <location evidence="2">Cell membrane</location>
        <topology evidence="2">Lipid-anchor</topology>
        <orientation evidence="2">Cytoplasmic side</orientation>
    </subcellularLocation>
</comment>
<comment type="similarity">
    <text evidence="3">Belongs to the cyclic nucleotide phosphodiesterase family.</text>
</comment>
<keyword id="KW-1003">Cell membrane</keyword>
<keyword id="KW-0140">cGMP</keyword>
<keyword id="KW-0378">Hydrolase</keyword>
<keyword id="KW-0449">Lipoprotein</keyword>
<keyword id="KW-0472">Membrane</keyword>
<keyword id="KW-0479">Metal-binding</keyword>
<keyword id="KW-0488">Methylation</keyword>
<keyword id="KW-0636">Prenylation</keyword>
<keyword id="KW-1185">Reference proteome</keyword>
<keyword id="KW-0677">Repeat</keyword>
<evidence type="ECO:0000250" key="1"/>
<evidence type="ECO:0000250" key="2">
    <source>
        <dbReference type="UniProtKB" id="Q9VFI9"/>
    </source>
</evidence>
<evidence type="ECO:0000255" key="3"/>
<evidence type="ECO:0000255" key="4">
    <source>
        <dbReference type="PROSITE-ProRule" id="PRU01192"/>
    </source>
</evidence>
<evidence type="ECO:0000256" key="5">
    <source>
        <dbReference type="SAM" id="MobiDB-lite"/>
    </source>
</evidence>
<evidence type="ECO:0000312" key="6">
    <source>
        <dbReference type="EMBL" id="EDX12939.1"/>
    </source>
</evidence>
<sequence length="1143" mass="126868">MHGPVSRSSSSSNMTDVSSPAGGAASPVEMTTSSSSAATTSASSSKPLTNGANKTTISTVAGGVAPGAVPGPGSGAIPASSSSGNQVKLEHHHRQSNNNRPAATNRSSETKLRSPAGESDGASRLMTPAGSSSSPSQSPSQTQASIQTQTSQQDRLAKASTTASQQDVDEVARLFEEKPEAFEKWLTERAPPEALSRLQEFIENRKPHKRPSVTSDLFQQWMAASPTVQQKSPRSLSNSSASSLPECRRHLMDLDEGELFMELIRDVANELDIDVLCHKILVNVGLLTHADRGSLFLAKGTPTNKYLVAKLFDVTQKTALKDAVTRASAEEIIIPFGIGIAGMVAQTKQMINIKEAYKDARFNCEIDLKTGYKTNAILCMPICNYEGDIIGVAQIINKTNGCMEFDEHDVEIFRRYLTFCGIGIQNAQLFEMSVQEYRRNQILLNLARSIFEEQNNLECLVTKIMTEARELLKCERCSVFLVDLDCCEASHLEKIIEKPNQQATRAIKSADSFEEKKMRNRFTVLFELGGEYQAANVSRPSVSELSSSTLAQIAQFVATTGQTVNICDVIEWVRDHNQIRAEDEIDSTQAILCMPIMNAQKKVIGVAQLINKANGVPFTDSDASIFEAFAIFCGLGIHNTQMYENACKLMAKQKVALECLSYHATASQDQTEKLTQDVIAEAESYNLYSFTFTDFELVDDDTCRAVLRMFMQCNLVSQFQIPYDVLCRWVLSVRKNYRPVKYHNWRHALNVAQTMFAMLKTGKMERFMTDLEILGLLVACLCHDLDHRGTNNAFQTKTESPLAILYTTSTMEHHHFDQCVMILNSEGNNIFQALSPEDYRSVMKTVESAILSTDLAMYFKKRNAFLELVENGEFDWQGEEKKDLLCGMMMTACDVSAIAKPWEVQHKVAKLVADEFFDQGDLEKLQLNTQPVAMMDRERKDELPKMQVGFIDVICLPLYRVLCDTFPWITPLYEGTLENRRNWQDLAEKVEMGLTWIDHDTIDKPVEEFAACADEEIKDIEFTVTTLNCNQQSQHGSEDSHTPEHQRSGSRLSMKKTGALGKAVRSKLSKTLYNSMDGSKPKTSLKLLESHVSEDMDDKSPTSPSQPQASGSMGRMSASSSTSSTGGQMVDKSKKRSKLCALL</sequence>
<protein>
    <recommendedName>
        <fullName evidence="2">cGMP-specific 3',5'-cyclic phosphodiesterase</fullName>
        <ecNumber>3.1.4.35</ecNumber>
    </recommendedName>
</protein>
<accession>B4QZU1</accession>
<organism>
    <name type="scientific">Drosophila simulans</name>
    <name type="common">Fruit fly</name>
    <dbReference type="NCBI Taxonomy" id="7240"/>
    <lineage>
        <taxon>Eukaryota</taxon>
        <taxon>Metazoa</taxon>
        <taxon>Ecdysozoa</taxon>
        <taxon>Arthropoda</taxon>
        <taxon>Hexapoda</taxon>
        <taxon>Insecta</taxon>
        <taxon>Pterygota</taxon>
        <taxon>Neoptera</taxon>
        <taxon>Endopterygota</taxon>
        <taxon>Diptera</taxon>
        <taxon>Brachycera</taxon>
        <taxon>Muscomorpha</taxon>
        <taxon>Ephydroidea</taxon>
        <taxon>Drosophilidae</taxon>
        <taxon>Drosophila</taxon>
        <taxon>Sophophora</taxon>
    </lineage>
</organism>
<feature type="chain" id="PRO_0000363698" description="cGMP-specific 3',5'-cyclic phosphodiesterase">
    <location>
        <begin position="1"/>
        <end position="1140"/>
    </location>
</feature>
<feature type="propeptide" id="PRO_0000363699" description="Removed in mature form" evidence="2">
    <location>
        <begin position="1141"/>
        <end position="1143"/>
    </location>
</feature>
<feature type="domain" description="GAF 1" evidence="3">
    <location>
        <begin position="272"/>
        <end position="424"/>
    </location>
</feature>
<feature type="domain" description="GAF 2" evidence="3">
    <location>
        <begin position="456"/>
        <end position="637"/>
    </location>
</feature>
<feature type="domain" description="PDEase" evidence="4">
    <location>
        <begin position="667"/>
        <end position="990"/>
    </location>
</feature>
<feature type="region of interest" description="Disordered" evidence="5">
    <location>
        <begin position="1"/>
        <end position="167"/>
    </location>
</feature>
<feature type="region of interest" description="Disordered" evidence="5">
    <location>
        <begin position="1031"/>
        <end position="1060"/>
    </location>
</feature>
<feature type="region of interest" description="Disordered" evidence="5">
    <location>
        <begin position="1090"/>
        <end position="1143"/>
    </location>
</feature>
<feature type="compositionally biased region" description="Low complexity" evidence="5">
    <location>
        <begin position="1"/>
        <end position="19"/>
    </location>
</feature>
<feature type="compositionally biased region" description="Low complexity" evidence="5">
    <location>
        <begin position="31"/>
        <end position="45"/>
    </location>
</feature>
<feature type="compositionally biased region" description="Polar residues" evidence="5">
    <location>
        <begin position="46"/>
        <end position="59"/>
    </location>
</feature>
<feature type="compositionally biased region" description="Low complexity" evidence="5">
    <location>
        <begin position="75"/>
        <end position="84"/>
    </location>
</feature>
<feature type="compositionally biased region" description="Polar residues" evidence="5">
    <location>
        <begin position="96"/>
        <end position="107"/>
    </location>
</feature>
<feature type="compositionally biased region" description="Low complexity" evidence="5">
    <location>
        <begin position="131"/>
        <end position="153"/>
    </location>
</feature>
<feature type="compositionally biased region" description="Basic and acidic residues" evidence="5">
    <location>
        <begin position="1036"/>
        <end position="1047"/>
    </location>
</feature>
<feature type="compositionally biased region" description="Basic and acidic residues" evidence="5">
    <location>
        <begin position="1090"/>
        <end position="1100"/>
    </location>
</feature>
<feature type="compositionally biased region" description="Low complexity" evidence="5">
    <location>
        <begin position="1109"/>
        <end position="1127"/>
    </location>
</feature>
<feature type="compositionally biased region" description="Basic residues" evidence="5">
    <location>
        <begin position="1133"/>
        <end position="1143"/>
    </location>
</feature>
<feature type="active site" description="Proton donor" evidence="1">
    <location>
        <position position="743"/>
    </location>
</feature>
<feature type="binding site" evidence="1">
    <location>
        <position position="747"/>
    </location>
    <ligand>
        <name>a divalent metal cation</name>
        <dbReference type="ChEBI" id="CHEBI:60240"/>
        <label>1</label>
    </ligand>
</feature>
<feature type="binding site" evidence="1">
    <location>
        <position position="783"/>
    </location>
    <ligand>
        <name>a divalent metal cation</name>
        <dbReference type="ChEBI" id="CHEBI:60240"/>
        <label>1</label>
    </ligand>
</feature>
<feature type="binding site" evidence="1">
    <location>
        <position position="784"/>
    </location>
    <ligand>
        <name>a divalent metal cation</name>
        <dbReference type="ChEBI" id="CHEBI:60240"/>
        <label>1</label>
    </ligand>
</feature>
<feature type="binding site" evidence="1">
    <location>
        <position position="784"/>
    </location>
    <ligand>
        <name>a divalent metal cation</name>
        <dbReference type="ChEBI" id="CHEBI:60240"/>
        <label>2</label>
    </ligand>
</feature>
<feature type="binding site" evidence="1">
    <location>
        <position position="894"/>
    </location>
    <ligand>
        <name>a divalent metal cation</name>
        <dbReference type="ChEBI" id="CHEBI:60240"/>
        <label>1</label>
    </ligand>
</feature>
<feature type="modified residue" description="Cysteine methyl ester" evidence="2">
    <location>
        <position position="1140"/>
    </location>
</feature>
<feature type="lipid moiety-binding region" description="S-farnesyl cysteine" evidence="2">
    <location>
        <position position="1140"/>
    </location>
</feature>